<proteinExistence type="evidence at protein level"/>
<comment type="function">
    <text evidence="4 6">Chemotactic-signal transducers respond to changes in the concentration of attractants and repellents in the environment, transduce a signal from the outside to the inside of the cell, and facilitate sensory adaptation through the variation of the level of methylation. McpG is a specific gamma-aminobutyric acid (GABA) chemoreceptor that recognizes GABA over a wide range of environmental conditions. Contributes to attraction to and colonization of plant roots.</text>
</comment>
<comment type="subcellular location">
    <subcellularLocation>
        <location evidence="6">Cell membrane</location>
        <topology evidence="1">Multi-pass membrane protein</topology>
    </subcellularLocation>
</comment>
<comment type="disruption phenotype">
    <text evidence="4">Deletion of the gene causes significant reduction in GABA chemotaxis and reduces root colonization.</text>
</comment>
<comment type="similarity">
    <text evidence="6">Belongs to the methyl-accepting chemotaxis (MCP) protein family.</text>
</comment>
<accession>Q88N45</accession>
<reference key="1">
    <citation type="journal article" date="2002" name="Environ. Microbiol.">
        <title>Complete genome sequence and comparative analysis of the metabolically versatile Pseudomonas putida KT2440.</title>
        <authorList>
            <person name="Nelson K.E."/>
            <person name="Weinel C."/>
            <person name="Paulsen I.T."/>
            <person name="Dodson R.J."/>
            <person name="Hilbert H."/>
            <person name="Martins dos Santos V.A.P."/>
            <person name="Fouts D.E."/>
            <person name="Gill S.R."/>
            <person name="Pop M."/>
            <person name="Holmes M."/>
            <person name="Brinkac L.M."/>
            <person name="Beanan M.J."/>
            <person name="DeBoy R.T."/>
            <person name="Daugherty S.C."/>
            <person name="Kolonay J.F."/>
            <person name="Madupu R."/>
            <person name="Nelson W.C."/>
            <person name="White O."/>
            <person name="Peterson J.D."/>
            <person name="Khouri H.M."/>
            <person name="Hance I."/>
            <person name="Chris Lee P."/>
            <person name="Holtzapple E.K."/>
            <person name="Scanlan D."/>
            <person name="Tran K."/>
            <person name="Moazzez A."/>
            <person name="Utterback T.R."/>
            <person name="Rizzo M."/>
            <person name="Lee K."/>
            <person name="Kosack D."/>
            <person name="Moestl D."/>
            <person name="Wedler H."/>
            <person name="Lauber J."/>
            <person name="Stjepandic D."/>
            <person name="Hoheisel J."/>
            <person name="Straetz M."/>
            <person name="Heim S."/>
            <person name="Kiewitz C."/>
            <person name="Eisen J.A."/>
            <person name="Timmis K.N."/>
            <person name="Duesterhoeft A."/>
            <person name="Tuemmler B."/>
            <person name="Fraser C.M."/>
        </authorList>
    </citation>
    <scope>NUCLEOTIDE SEQUENCE [LARGE SCALE GENOMIC DNA]</scope>
    <source>
        <strain>ATCC 47054 / DSM 6125 / CFBP 8728 / NCIMB 11950 / KT2440</strain>
    </source>
</reference>
<reference key="2">
    <citation type="journal article" date="2015" name="Mol. Microbiol.">
        <title>Specific gamma-aminobutyrate chemotaxis in pseudomonads with different lifestyle.</title>
        <authorList>
            <person name="Reyes-Darias J.A."/>
            <person name="Garcia V."/>
            <person name="Rico-Jimenez M."/>
            <person name="Corral-Lugo A."/>
            <person name="Lesouhaitier O."/>
            <person name="Juarez-Hernandez D."/>
            <person name="Yang Y."/>
            <person name="Bi S."/>
            <person name="Feuilloley M."/>
            <person name="Munoz-Rojas J."/>
            <person name="Sourjik V."/>
            <person name="Krell T."/>
        </authorList>
    </citation>
    <scope>FUNCTION AS A GABA CHEMORECEPTOR</scope>
    <scope>DISRUPTION PHENOTYPE</scope>
    <source>
        <strain>ATCC 47054 / DSM 6125 / CFBP 8728 / NCIMB 11950 / KT2440</strain>
    </source>
</reference>
<feature type="chain" id="PRO_0000438505" description="Methyl-accepting chemotaxis protein McpG">
    <location>
        <begin position="1"/>
        <end position="624"/>
    </location>
</feature>
<feature type="transmembrane region" description="Helical" evidence="1">
    <location>
        <begin position="11"/>
        <end position="31"/>
    </location>
</feature>
<feature type="transmembrane region" description="Helical" evidence="1">
    <location>
        <begin position="272"/>
        <end position="292"/>
    </location>
</feature>
<feature type="domain" description="Cache" evidence="1">
    <location>
        <begin position="36"/>
        <end position="254"/>
    </location>
</feature>
<feature type="domain" description="HAMP" evidence="2">
    <location>
        <begin position="293"/>
        <end position="347"/>
    </location>
</feature>
<feature type="domain" description="Methyl-accepting transducer" evidence="3">
    <location>
        <begin position="352"/>
        <end position="588"/>
    </location>
</feature>
<dbReference type="EMBL" id="AE015451">
    <property type="protein sequence ID" value="AAN66994.1"/>
    <property type="molecule type" value="Genomic_DNA"/>
</dbReference>
<dbReference type="RefSeq" id="NP_743530.1">
    <property type="nucleotide sequence ID" value="NC_002947.4"/>
</dbReference>
<dbReference type="RefSeq" id="WP_010952482.1">
    <property type="nucleotide sequence ID" value="NC_002947.4"/>
</dbReference>
<dbReference type="SMR" id="Q88N45"/>
<dbReference type="STRING" id="160488.PP_1371"/>
<dbReference type="PaxDb" id="160488-PP_1371"/>
<dbReference type="KEGG" id="ppu:PP_1371"/>
<dbReference type="PATRIC" id="fig|160488.4.peg.1454"/>
<dbReference type="eggNOG" id="COG0840">
    <property type="taxonomic scope" value="Bacteria"/>
</dbReference>
<dbReference type="HOGENOM" id="CLU_000445_107_19_6"/>
<dbReference type="OrthoDB" id="7021108at2"/>
<dbReference type="PhylomeDB" id="Q88N45"/>
<dbReference type="BioCyc" id="PPUT160488:G1G01-1461-MONOMER"/>
<dbReference type="Proteomes" id="UP000000556">
    <property type="component" value="Chromosome"/>
</dbReference>
<dbReference type="GO" id="GO:0005886">
    <property type="term" value="C:plasma membrane"/>
    <property type="evidence" value="ECO:0007669"/>
    <property type="project" value="UniProtKB-SubCell"/>
</dbReference>
<dbReference type="GO" id="GO:0004888">
    <property type="term" value="F:transmembrane signaling receptor activity"/>
    <property type="evidence" value="ECO:0007669"/>
    <property type="project" value="InterPro"/>
</dbReference>
<dbReference type="GO" id="GO:0006935">
    <property type="term" value="P:chemotaxis"/>
    <property type="evidence" value="ECO:0007669"/>
    <property type="project" value="UniProtKB-KW"/>
</dbReference>
<dbReference type="GO" id="GO:0007165">
    <property type="term" value="P:signal transduction"/>
    <property type="evidence" value="ECO:0007669"/>
    <property type="project" value="UniProtKB-KW"/>
</dbReference>
<dbReference type="CDD" id="cd06225">
    <property type="entry name" value="HAMP"/>
    <property type="match status" value="1"/>
</dbReference>
<dbReference type="CDD" id="cd11386">
    <property type="entry name" value="MCP_signal"/>
    <property type="match status" value="1"/>
</dbReference>
<dbReference type="CDD" id="cd12913">
    <property type="entry name" value="PDC1_MCP_like"/>
    <property type="match status" value="1"/>
</dbReference>
<dbReference type="CDD" id="cd12912">
    <property type="entry name" value="PDC2_MCP_like"/>
    <property type="match status" value="1"/>
</dbReference>
<dbReference type="FunFam" id="1.10.287.950:FF:000001">
    <property type="entry name" value="Methyl-accepting chemotaxis sensory transducer"/>
    <property type="match status" value="1"/>
</dbReference>
<dbReference type="Gene3D" id="1.10.287.950">
    <property type="entry name" value="Methyl-accepting chemotaxis protein"/>
    <property type="match status" value="1"/>
</dbReference>
<dbReference type="Gene3D" id="3.30.450.20">
    <property type="entry name" value="PAS domain"/>
    <property type="match status" value="2"/>
</dbReference>
<dbReference type="InterPro" id="IPR004090">
    <property type="entry name" value="Chemotax_Me-accpt_rcpt"/>
</dbReference>
<dbReference type="InterPro" id="IPR033479">
    <property type="entry name" value="dCache_1"/>
</dbReference>
<dbReference type="InterPro" id="IPR003660">
    <property type="entry name" value="HAMP_dom"/>
</dbReference>
<dbReference type="InterPro" id="IPR004089">
    <property type="entry name" value="MCPsignal_dom"/>
</dbReference>
<dbReference type="InterPro" id="IPR029151">
    <property type="entry name" value="Sensor-like_sf"/>
</dbReference>
<dbReference type="PANTHER" id="PTHR32089:SF39">
    <property type="entry name" value="METHYL-ACCEPTING CHEMOTAXIS PROTEIN HLYB"/>
    <property type="match status" value="1"/>
</dbReference>
<dbReference type="PANTHER" id="PTHR32089">
    <property type="entry name" value="METHYL-ACCEPTING CHEMOTAXIS PROTEIN MCPB"/>
    <property type="match status" value="1"/>
</dbReference>
<dbReference type="Pfam" id="PF02743">
    <property type="entry name" value="dCache_1"/>
    <property type="match status" value="1"/>
</dbReference>
<dbReference type="Pfam" id="PF00672">
    <property type="entry name" value="HAMP"/>
    <property type="match status" value="1"/>
</dbReference>
<dbReference type="Pfam" id="PF00015">
    <property type="entry name" value="MCPsignal"/>
    <property type="match status" value="1"/>
</dbReference>
<dbReference type="PRINTS" id="PR00260">
    <property type="entry name" value="CHEMTRNSDUCR"/>
</dbReference>
<dbReference type="SMART" id="SM00304">
    <property type="entry name" value="HAMP"/>
    <property type="match status" value="1"/>
</dbReference>
<dbReference type="SMART" id="SM00283">
    <property type="entry name" value="MA"/>
    <property type="match status" value="1"/>
</dbReference>
<dbReference type="SUPFAM" id="SSF58104">
    <property type="entry name" value="Methyl-accepting chemotaxis protein (MCP) signaling domain"/>
    <property type="match status" value="1"/>
</dbReference>
<dbReference type="SUPFAM" id="SSF103190">
    <property type="entry name" value="Sensory domain-like"/>
    <property type="match status" value="1"/>
</dbReference>
<dbReference type="PROSITE" id="PS50111">
    <property type="entry name" value="CHEMOTAXIS_TRANSDUC_2"/>
    <property type="match status" value="1"/>
</dbReference>
<dbReference type="PROSITE" id="PS50885">
    <property type="entry name" value="HAMP"/>
    <property type="match status" value="1"/>
</dbReference>
<evidence type="ECO:0000255" key="1"/>
<evidence type="ECO:0000255" key="2">
    <source>
        <dbReference type="PROSITE-ProRule" id="PRU00102"/>
    </source>
</evidence>
<evidence type="ECO:0000255" key="3">
    <source>
        <dbReference type="PROSITE-ProRule" id="PRU00284"/>
    </source>
</evidence>
<evidence type="ECO:0000269" key="4">
    <source>
    </source>
</evidence>
<evidence type="ECO:0000303" key="5">
    <source>
    </source>
</evidence>
<evidence type="ECO:0000305" key="6"/>
<evidence type="ECO:0000312" key="7">
    <source>
        <dbReference type="EMBL" id="AAN66994.1"/>
    </source>
</evidence>
<protein>
    <recommendedName>
        <fullName evidence="6">Methyl-accepting chemotaxis protein McpG</fullName>
    </recommendedName>
</protein>
<keyword id="KW-1003">Cell membrane</keyword>
<keyword id="KW-0145">Chemotaxis</keyword>
<keyword id="KW-0472">Membrane</keyword>
<keyword id="KW-0488">Methylation</keyword>
<keyword id="KW-1185">Reference proteome</keyword>
<keyword id="KW-0807">Transducer</keyword>
<keyword id="KW-0812">Transmembrane</keyword>
<keyword id="KW-1133">Transmembrane helix</keyword>
<gene>
    <name evidence="5" type="primary">mcpG</name>
    <name evidence="7" type="synonym">pctA</name>
    <name evidence="7" type="ordered locus">PP_1371</name>
</gene>
<sequence>MNKSLRFSHKILLAASLIVILAFSLFTLYNDYLQRNAIREDLENYLAEMGASTSTNIRNLFEGRIKLVENLAQNIAQDPANAETLMGQNALISSFLTVYLGKVDGGFSVRPDAKMPDGYDPRTRPWYKDGMNASGATLTEPYIDMTTNKMVIGILSKVSSSVGVVGGDLALDGLVQIINSLNFGGMGYAFLVNDQGKILVHPDKDLVMKSLSDLFPQHTPKLTGELTEVQSDGQTRLLTFSPITGLPSANWYIGLSVDKDKAFSMLSTFRTSAVIATVVAVVIIIGLLGLLIRVLMQPLHTMTRAMEDIAEGEGDLTKRLHIHSHDEFGVLGNAFNRFVERIHSSIREVSSATEQVNEVALRVISASNSSMTNSDEQSNRTNSVAAAINELGAAAQEIAGNAAQASQHASSARLLAEEGQQVVERNIAAMNRLSDLIVTSSAHIETLNSKTVNIGQILEVITSISQQTNLLALNAAIEAARAGEAGRGFAVVADEVRNLAHRTQESAQQVQTMIEELQVGARESVDTMEQSQRHSQDSMQIANQAGERLDSVTVRIGEIDGMNQSVATATEEQTAVVEAINMDINEINMLNQEGVENLQATLRACSDLEQQAGRLKHLVGSFRI</sequence>
<name>MCPG_PSEPK</name>
<organism>
    <name type="scientific">Pseudomonas putida (strain ATCC 47054 / DSM 6125 / CFBP 8728 / NCIMB 11950 / KT2440)</name>
    <dbReference type="NCBI Taxonomy" id="160488"/>
    <lineage>
        <taxon>Bacteria</taxon>
        <taxon>Pseudomonadati</taxon>
        <taxon>Pseudomonadota</taxon>
        <taxon>Gammaproteobacteria</taxon>
        <taxon>Pseudomonadales</taxon>
        <taxon>Pseudomonadaceae</taxon>
        <taxon>Pseudomonas</taxon>
    </lineage>
</organism>